<sequence length="395" mass="45486">MSQHFHHNPVRVKSGSLFATASEALQARLSKIKRKDKECQAYFRKVIKSTFFQIVMITTVTTNSFLLVLGTNYDIQFEFFRTFEVSELFFVSVYVCEFLMKVYVDPITYWKDGYNILDVIILIILTIPYLLRKIKGNHSAYLHFADGIQSLRILKLISYSRGIRTLIIAVGETVYTVASVLTLLFLLMFVFAILGFCLFGVTDRGDLENWGNLASAFFTLFSLATVDGWTDLQEELDKRKFTVSRAFTILFILLASFIFLNMFVGVMIMHTEDSMKKFERDLTLERNLAIMEEKQIILKRQQEEVNRLMNTQKSGSMNFIDMVEGFKKTLRHTDPMVLDDFSTSLSFIDIYLVTLDNQDVIVSKLQELYCEIVNVLSLMLEDMPKESSSSLSGLS</sequence>
<dbReference type="EMBL" id="AY263400">
    <property type="protein sequence ID" value="AAP21831.1"/>
    <property type="molecule type" value="mRNA"/>
</dbReference>
<dbReference type="EMBL" id="AK014942">
    <property type="protein sequence ID" value="BAB29631.1"/>
    <property type="molecule type" value="mRNA"/>
</dbReference>
<dbReference type="EMBL" id="BC089518">
    <property type="protein sequence ID" value="AAH89518.1"/>
    <property type="status" value="ALT_SEQ"/>
    <property type="molecule type" value="mRNA"/>
</dbReference>
<dbReference type="CCDS" id="CCDS26555.1">
    <molecule id="Q80W99-2"/>
</dbReference>
<dbReference type="CCDS" id="CCDS56885.1">
    <molecule id="Q80W99-1"/>
</dbReference>
<dbReference type="RefSeq" id="NP_001239416.1">
    <molecule id="Q80W99-1"/>
    <property type="nucleotide sequence ID" value="NM_001252487.1"/>
</dbReference>
<dbReference type="RefSeq" id="NP_084048.1">
    <molecule id="Q80W99-2"/>
    <property type="nucleotide sequence ID" value="NM_029772.4"/>
</dbReference>
<dbReference type="RefSeq" id="XP_006517518.1">
    <molecule id="Q80W99-1"/>
    <property type="nucleotide sequence ID" value="XM_006517455.3"/>
</dbReference>
<dbReference type="PDB" id="7EEB">
    <property type="method" value="EM"/>
    <property type="resolution" value="2.90 A"/>
    <property type="chains" value="C=1-395"/>
</dbReference>
<dbReference type="PDBsum" id="7EEB"/>
<dbReference type="EMDB" id="EMD-31076"/>
<dbReference type="SMR" id="Q80W99"/>
<dbReference type="BioGRID" id="218352">
    <property type="interactions" value="3"/>
</dbReference>
<dbReference type="ComplexPortal" id="CPX-9078">
    <property type="entry name" value="CatSpermasome complex, gamma subunit variant 2"/>
</dbReference>
<dbReference type="CORUM" id="Q80W99"/>
<dbReference type="DIP" id="DIP-60802N"/>
<dbReference type="FunCoup" id="Q80W99">
    <property type="interactions" value="16"/>
</dbReference>
<dbReference type="IntAct" id="Q80W99">
    <property type="interactions" value="1"/>
</dbReference>
<dbReference type="STRING" id="10090.ENSMUSP00000021961"/>
<dbReference type="GuidetoPHARMACOLOGY" id="390"/>
<dbReference type="TCDB" id="1.A.1.19.3">
    <property type="family name" value="the voltage-gated ion channel (vic) superfamily"/>
</dbReference>
<dbReference type="PhosphoSitePlus" id="Q80W99"/>
<dbReference type="jPOST" id="Q80W99"/>
<dbReference type="PaxDb" id="10090-ENSMUSP00000021961"/>
<dbReference type="ProteomicsDB" id="285427">
    <molecule id="Q80W99-1"/>
</dbReference>
<dbReference type="ProteomicsDB" id="285428">
    <molecule id="Q80W99-2"/>
</dbReference>
<dbReference type="Antibodypedia" id="26383">
    <property type="antibodies" value="63 antibodies from 16 providers"/>
</dbReference>
<dbReference type="DNASU" id="76856"/>
<dbReference type="Ensembl" id="ENSMUST00000021961.12">
    <molecule id="Q80W99-1"/>
    <property type="protein sequence ID" value="ENSMUSP00000021961.6"/>
    <property type="gene ID" value="ENSMUSG00000021499.13"/>
</dbReference>
<dbReference type="Ensembl" id="ENSMUST00000109898.3">
    <molecule id="Q80W99-2"/>
    <property type="protein sequence ID" value="ENSMUSP00000105524.3"/>
    <property type="gene ID" value="ENSMUSG00000021499.13"/>
</dbReference>
<dbReference type="GeneID" id="76856"/>
<dbReference type="KEGG" id="mmu:76856"/>
<dbReference type="UCSC" id="uc007qsb.2">
    <molecule id="Q80W99-2"/>
    <property type="organism name" value="mouse"/>
</dbReference>
<dbReference type="UCSC" id="uc007qsc.2">
    <molecule id="Q80W99-1"/>
    <property type="organism name" value="mouse"/>
</dbReference>
<dbReference type="AGR" id="MGI:1924106"/>
<dbReference type="CTD" id="347732"/>
<dbReference type="MGI" id="MGI:1924106">
    <property type="gene designation" value="Catsper3"/>
</dbReference>
<dbReference type="VEuPathDB" id="HostDB:ENSMUSG00000021499"/>
<dbReference type="eggNOG" id="KOG2302">
    <property type="taxonomic scope" value="Eukaryota"/>
</dbReference>
<dbReference type="GeneTree" id="ENSGT00940000161455"/>
<dbReference type="HOGENOM" id="CLU_058058_0_0_1"/>
<dbReference type="InParanoid" id="Q80W99"/>
<dbReference type="OMA" id="YETMAVY"/>
<dbReference type="OrthoDB" id="416585at2759"/>
<dbReference type="PhylomeDB" id="Q80W99"/>
<dbReference type="TreeFam" id="TF343841"/>
<dbReference type="Reactome" id="R-MMU-1300642">
    <property type="pathway name" value="Sperm Motility And Taxes"/>
</dbReference>
<dbReference type="BioGRID-ORCS" id="76856">
    <property type="hits" value="1 hit in 78 CRISPR screens"/>
</dbReference>
<dbReference type="ChiTaRS" id="Catsper3">
    <property type="organism name" value="mouse"/>
</dbReference>
<dbReference type="PRO" id="PR:Q80W99"/>
<dbReference type="Proteomes" id="UP000000589">
    <property type="component" value="Chromosome 13"/>
</dbReference>
<dbReference type="RNAct" id="Q80W99">
    <property type="molecule type" value="protein"/>
</dbReference>
<dbReference type="Bgee" id="ENSMUSG00000021499">
    <property type="expression patterns" value="Expressed in spermatid and 14 other cell types or tissues"/>
</dbReference>
<dbReference type="ExpressionAtlas" id="Q80W99">
    <property type="expression patterns" value="baseline and differential"/>
</dbReference>
<dbReference type="GO" id="GO:0001669">
    <property type="term" value="C:acrosomal vesicle"/>
    <property type="evidence" value="ECO:0000314"/>
    <property type="project" value="MGI"/>
</dbReference>
<dbReference type="GO" id="GO:0036128">
    <property type="term" value="C:CatSper complex"/>
    <property type="evidence" value="ECO:0000314"/>
    <property type="project" value="UniProtKB"/>
</dbReference>
<dbReference type="GO" id="GO:0005783">
    <property type="term" value="C:endoplasmic reticulum"/>
    <property type="evidence" value="ECO:0000314"/>
    <property type="project" value="MGI"/>
</dbReference>
<dbReference type="GO" id="GO:0031514">
    <property type="term" value="C:motile cilium"/>
    <property type="evidence" value="ECO:0007669"/>
    <property type="project" value="UniProtKB-KW"/>
</dbReference>
<dbReference type="GO" id="GO:0005245">
    <property type="term" value="F:voltage-gated calcium channel activity"/>
    <property type="evidence" value="ECO:0000315"/>
    <property type="project" value="MGI"/>
</dbReference>
<dbReference type="GO" id="GO:0051649">
    <property type="term" value="P:establishment of localization in cell"/>
    <property type="evidence" value="ECO:0000315"/>
    <property type="project" value="MGI"/>
</dbReference>
<dbReference type="GO" id="GO:0030317">
    <property type="term" value="P:flagellated sperm motility"/>
    <property type="evidence" value="ECO:0000315"/>
    <property type="project" value="MGI"/>
</dbReference>
<dbReference type="GO" id="GO:0006814">
    <property type="term" value="P:sodium ion transport"/>
    <property type="evidence" value="ECO:0000315"/>
    <property type="project" value="MGI"/>
</dbReference>
<dbReference type="GO" id="GO:0048240">
    <property type="term" value="P:sperm capacitation"/>
    <property type="evidence" value="ECO:0000315"/>
    <property type="project" value="MGI"/>
</dbReference>
<dbReference type="Gene3D" id="1.10.287.70">
    <property type="match status" value="1"/>
</dbReference>
<dbReference type="Gene3D" id="1.20.120.350">
    <property type="entry name" value="Voltage-gated potassium channels. Chain C"/>
    <property type="match status" value="1"/>
</dbReference>
<dbReference type="InterPro" id="IPR005821">
    <property type="entry name" value="Ion_trans_dom"/>
</dbReference>
<dbReference type="InterPro" id="IPR027359">
    <property type="entry name" value="Volt_channel_dom_sf"/>
</dbReference>
<dbReference type="PANTHER" id="PTHR47131">
    <property type="entry name" value="CATION CHANNEL SPERM-ASSOCIATED PROTEIN 3"/>
    <property type="match status" value="1"/>
</dbReference>
<dbReference type="PANTHER" id="PTHR47131:SF1">
    <property type="entry name" value="CATION CHANNEL SPERM-ASSOCIATED PROTEIN 3"/>
    <property type="match status" value="1"/>
</dbReference>
<dbReference type="Pfam" id="PF00520">
    <property type="entry name" value="Ion_trans"/>
    <property type="match status" value="1"/>
</dbReference>
<dbReference type="SUPFAM" id="SSF81324">
    <property type="entry name" value="Voltage-gated potassium channels"/>
    <property type="match status" value="1"/>
</dbReference>
<keyword id="KW-0002">3D-structure</keyword>
<keyword id="KW-0025">Alternative splicing</keyword>
<keyword id="KW-0106">Calcium</keyword>
<keyword id="KW-0107">Calcium channel</keyword>
<keyword id="KW-0109">Calcium transport</keyword>
<keyword id="KW-1003">Cell membrane</keyword>
<keyword id="KW-0966">Cell projection</keyword>
<keyword id="KW-0969">Cilium</keyword>
<keyword id="KW-0217">Developmental protein</keyword>
<keyword id="KW-0221">Differentiation</keyword>
<keyword id="KW-0282">Flagellum</keyword>
<keyword id="KW-0407">Ion channel</keyword>
<keyword id="KW-0406">Ion transport</keyword>
<keyword id="KW-0472">Membrane</keyword>
<keyword id="KW-1185">Reference proteome</keyword>
<keyword id="KW-0744">Spermatogenesis</keyword>
<keyword id="KW-0812">Transmembrane</keyword>
<keyword id="KW-1133">Transmembrane helix</keyword>
<keyword id="KW-0813">Transport</keyword>
<keyword id="KW-0851">Voltage-gated channel</keyword>
<reference key="1">
    <citation type="journal article" date="2007" name="Proc. Natl. Acad. Sci. U.S.A.">
        <title>All four CatSper ion channel proteins are required for male fertility and sperm cell hyperactivated motility.</title>
        <authorList>
            <person name="Qi H."/>
            <person name="Moran M.M."/>
            <person name="Navarro B."/>
            <person name="Chong J.A."/>
            <person name="Krapivinsky G."/>
            <person name="Krapivinsky L."/>
            <person name="Kirichok Y."/>
            <person name="Ramsey I.S."/>
            <person name="Quill T.A."/>
            <person name="Clapham D.E."/>
        </authorList>
    </citation>
    <scope>NUCLEOTIDE SEQUENCE [MRNA] (ISOFORM 1)</scope>
    <scope>FUNCTION</scope>
    <scope>SUBCELLULAR LOCATION</scope>
    <scope>TISSUE SPECIFICITY</scope>
    <scope>INTERACTION WITH CATSPER1</scope>
    <scope>DISRUPTION PHENOTYPE</scope>
    <source>
        <strain>BALB/cJ</strain>
        <tissue>Testis</tissue>
    </source>
</reference>
<reference key="2">
    <citation type="journal article" date="2005" name="Science">
        <title>The transcriptional landscape of the mammalian genome.</title>
        <authorList>
            <person name="Carninci P."/>
            <person name="Kasukawa T."/>
            <person name="Katayama S."/>
            <person name="Gough J."/>
            <person name="Frith M.C."/>
            <person name="Maeda N."/>
            <person name="Oyama R."/>
            <person name="Ravasi T."/>
            <person name="Lenhard B."/>
            <person name="Wells C."/>
            <person name="Kodzius R."/>
            <person name="Shimokawa K."/>
            <person name="Bajic V.B."/>
            <person name="Brenner S.E."/>
            <person name="Batalov S."/>
            <person name="Forrest A.R."/>
            <person name="Zavolan M."/>
            <person name="Davis M.J."/>
            <person name="Wilming L.G."/>
            <person name="Aidinis V."/>
            <person name="Allen J.E."/>
            <person name="Ambesi-Impiombato A."/>
            <person name="Apweiler R."/>
            <person name="Aturaliya R.N."/>
            <person name="Bailey T.L."/>
            <person name="Bansal M."/>
            <person name="Baxter L."/>
            <person name="Beisel K.W."/>
            <person name="Bersano T."/>
            <person name="Bono H."/>
            <person name="Chalk A.M."/>
            <person name="Chiu K.P."/>
            <person name="Choudhary V."/>
            <person name="Christoffels A."/>
            <person name="Clutterbuck D.R."/>
            <person name="Crowe M.L."/>
            <person name="Dalla E."/>
            <person name="Dalrymple B.P."/>
            <person name="de Bono B."/>
            <person name="Della Gatta G."/>
            <person name="di Bernardo D."/>
            <person name="Down T."/>
            <person name="Engstrom P."/>
            <person name="Fagiolini M."/>
            <person name="Faulkner G."/>
            <person name="Fletcher C.F."/>
            <person name="Fukushima T."/>
            <person name="Furuno M."/>
            <person name="Futaki S."/>
            <person name="Gariboldi M."/>
            <person name="Georgii-Hemming P."/>
            <person name="Gingeras T.R."/>
            <person name="Gojobori T."/>
            <person name="Green R.E."/>
            <person name="Gustincich S."/>
            <person name="Harbers M."/>
            <person name="Hayashi Y."/>
            <person name="Hensch T.K."/>
            <person name="Hirokawa N."/>
            <person name="Hill D."/>
            <person name="Huminiecki L."/>
            <person name="Iacono M."/>
            <person name="Ikeo K."/>
            <person name="Iwama A."/>
            <person name="Ishikawa T."/>
            <person name="Jakt M."/>
            <person name="Kanapin A."/>
            <person name="Katoh M."/>
            <person name="Kawasawa Y."/>
            <person name="Kelso J."/>
            <person name="Kitamura H."/>
            <person name="Kitano H."/>
            <person name="Kollias G."/>
            <person name="Krishnan S.P."/>
            <person name="Kruger A."/>
            <person name="Kummerfeld S.K."/>
            <person name="Kurochkin I.V."/>
            <person name="Lareau L.F."/>
            <person name="Lazarevic D."/>
            <person name="Lipovich L."/>
            <person name="Liu J."/>
            <person name="Liuni S."/>
            <person name="McWilliam S."/>
            <person name="Madan Babu M."/>
            <person name="Madera M."/>
            <person name="Marchionni L."/>
            <person name="Matsuda H."/>
            <person name="Matsuzawa S."/>
            <person name="Miki H."/>
            <person name="Mignone F."/>
            <person name="Miyake S."/>
            <person name="Morris K."/>
            <person name="Mottagui-Tabar S."/>
            <person name="Mulder N."/>
            <person name="Nakano N."/>
            <person name="Nakauchi H."/>
            <person name="Ng P."/>
            <person name="Nilsson R."/>
            <person name="Nishiguchi S."/>
            <person name="Nishikawa S."/>
            <person name="Nori F."/>
            <person name="Ohara O."/>
            <person name="Okazaki Y."/>
            <person name="Orlando V."/>
            <person name="Pang K.C."/>
            <person name="Pavan W.J."/>
            <person name="Pavesi G."/>
            <person name="Pesole G."/>
            <person name="Petrovsky N."/>
            <person name="Piazza S."/>
            <person name="Reed J."/>
            <person name="Reid J.F."/>
            <person name="Ring B.Z."/>
            <person name="Ringwald M."/>
            <person name="Rost B."/>
            <person name="Ruan Y."/>
            <person name="Salzberg S.L."/>
            <person name="Sandelin A."/>
            <person name="Schneider C."/>
            <person name="Schoenbach C."/>
            <person name="Sekiguchi K."/>
            <person name="Semple C.A."/>
            <person name="Seno S."/>
            <person name="Sessa L."/>
            <person name="Sheng Y."/>
            <person name="Shibata Y."/>
            <person name="Shimada H."/>
            <person name="Shimada K."/>
            <person name="Silva D."/>
            <person name="Sinclair B."/>
            <person name="Sperling S."/>
            <person name="Stupka E."/>
            <person name="Sugiura K."/>
            <person name="Sultana R."/>
            <person name="Takenaka Y."/>
            <person name="Taki K."/>
            <person name="Tammoja K."/>
            <person name="Tan S.L."/>
            <person name="Tang S."/>
            <person name="Taylor M.S."/>
            <person name="Tegner J."/>
            <person name="Teichmann S.A."/>
            <person name="Ueda H.R."/>
            <person name="van Nimwegen E."/>
            <person name="Verardo R."/>
            <person name="Wei C.L."/>
            <person name="Yagi K."/>
            <person name="Yamanishi H."/>
            <person name="Zabarovsky E."/>
            <person name="Zhu S."/>
            <person name="Zimmer A."/>
            <person name="Hide W."/>
            <person name="Bult C."/>
            <person name="Grimmond S.M."/>
            <person name="Teasdale R.D."/>
            <person name="Liu E.T."/>
            <person name="Brusic V."/>
            <person name="Quackenbush J."/>
            <person name="Wahlestedt C."/>
            <person name="Mattick J.S."/>
            <person name="Hume D.A."/>
            <person name="Kai C."/>
            <person name="Sasaki D."/>
            <person name="Tomaru Y."/>
            <person name="Fukuda S."/>
            <person name="Kanamori-Katayama M."/>
            <person name="Suzuki M."/>
            <person name="Aoki J."/>
            <person name="Arakawa T."/>
            <person name="Iida J."/>
            <person name="Imamura K."/>
            <person name="Itoh M."/>
            <person name="Kato T."/>
            <person name="Kawaji H."/>
            <person name="Kawagashira N."/>
            <person name="Kawashima T."/>
            <person name="Kojima M."/>
            <person name="Kondo S."/>
            <person name="Konno H."/>
            <person name="Nakano K."/>
            <person name="Ninomiya N."/>
            <person name="Nishio T."/>
            <person name="Okada M."/>
            <person name="Plessy C."/>
            <person name="Shibata K."/>
            <person name="Shiraki T."/>
            <person name="Suzuki S."/>
            <person name="Tagami M."/>
            <person name="Waki K."/>
            <person name="Watahiki A."/>
            <person name="Okamura-Oho Y."/>
            <person name="Suzuki H."/>
            <person name="Kawai J."/>
            <person name="Hayashizaki Y."/>
        </authorList>
    </citation>
    <scope>NUCLEOTIDE SEQUENCE [LARGE SCALE MRNA] (ISOFORM 2)</scope>
    <source>
        <strain>C57BL/6J</strain>
        <tissue>Testis</tissue>
    </source>
</reference>
<reference key="3">
    <citation type="journal article" date="2004" name="Genome Res.">
        <title>The status, quality, and expansion of the NIH full-length cDNA project: the Mammalian Gene Collection (MGC).</title>
        <authorList>
            <consortium name="The MGC Project Team"/>
        </authorList>
    </citation>
    <scope>NUCLEOTIDE SEQUENCE [LARGE SCALE MRNA] (ISOFORM 1)</scope>
    <source>
        <tissue>Testis</tissue>
    </source>
</reference>
<reference key="4">
    <citation type="journal article" date="2005" name="Biol. Reprod.">
        <title>Catsper3 and catsper4 encode two cation channel-like proteins exclusively expressed in the testis.</title>
        <authorList>
            <person name="Jin J.-L."/>
            <person name="O'Doherty A.M."/>
            <person name="Wang S."/>
            <person name="Zheng H."/>
            <person name="Sanders K.M."/>
            <person name="Yan W."/>
        </authorList>
    </citation>
    <scope>SUBCELLULAR LOCATION</scope>
    <scope>TISSUE SPECIFICITY</scope>
</reference>
<reference key="5">
    <citation type="journal article" date="2007" name="Mol. Hum. Reprod.">
        <title>Expression of CatSper family transcripts in the mouse testis during post-natal development and human ejaculated spermatozoa: relationship to sperm motility.</title>
        <authorList>
            <person name="Li H.-G."/>
            <person name="Ding X.-F."/>
            <person name="Liao A.-H."/>
            <person name="Kong X.-B."/>
            <person name="Xiong C.-L."/>
        </authorList>
    </citation>
    <scope>DEVELOPMENTAL STAGE</scope>
</reference>
<reference key="6">
    <citation type="journal article" date="2007" name="Biol. Reprod.">
        <title>Catsper3 and catsper4 are essential for sperm hyperactivated motility and male fertility in the mouse.</title>
        <authorList>
            <person name="Jin J.-L."/>
            <person name="Jin N."/>
            <person name="Zheng H."/>
            <person name="Ro S."/>
            <person name="Tafolla D."/>
            <person name="Sanders K.M."/>
            <person name="Yan W."/>
        </authorList>
    </citation>
    <scope>FUNCTION</scope>
    <scope>TRANSPORTER ACTIVITY</scope>
    <scope>DISRUPTION PHENOTYPE</scope>
</reference>
<reference key="7">
    <citation type="journal article" date="2011" name="Nature">
        <title>Progesterone activates the principal Ca2+ channel of human sperm.</title>
        <authorList>
            <person name="Lishko P.V."/>
            <person name="Botchkina I.L."/>
            <person name="Kirichok Y."/>
        </authorList>
    </citation>
    <scope>FUNCTION</scope>
    <scope>TRANSPORTER ACTIVITY</scope>
    <scope>LACK OF ACTIVATION BY PROGESTERONE AND PGE1</scope>
</reference>
<reference key="8">
    <citation type="journal article" date="2011" name="Nat. Commun.">
        <title>A novel gene required for male fertility and functional CATSPER channel formation in spermatozoa.</title>
        <authorList>
            <person name="Chung J.J."/>
            <person name="Navarro B."/>
            <person name="Krapivinsky G."/>
            <person name="Krapivinsky L."/>
            <person name="Clapham D.E."/>
        </authorList>
    </citation>
    <scope>IDENTIFICATION IN THE CATSPER COMPLEX</scope>
    <source>
        <strain>C57BL/6J</strain>
    </source>
</reference>
<reference key="9">
    <citation type="journal article" date="2022" name="Cell Rep.">
        <title>C2cd6-encoded CatSpertau targets sperm calcium channel to Ca2+ signaling domains in the flagellar membrane.</title>
        <authorList>
            <person name="Hwang J.Y."/>
            <person name="Wang H."/>
            <person name="Lu Y."/>
            <person name="Ikawa M."/>
            <person name="Chung J.J."/>
        </authorList>
    </citation>
    <scope>IDENTIFICATION IN THE CATSPER COMPLEX</scope>
</reference>
<reference key="10">
    <citation type="journal article" date="2021" name="Nature">
        <title>Structure of a mammalian sperm cation channel complex.</title>
        <authorList>
            <person name="Lin S."/>
            <person name="Ke M."/>
            <person name="Zhang Y."/>
            <person name="Yan Z."/>
            <person name="Wu J."/>
        </authorList>
    </citation>
    <scope>STRUCTURE BY ELECTRON MICROSCOPY (2.9 ANGSTROMS) OF THE CATSPER COMPLEX</scope>
    <scope>IDENTIFICATION BY MASS SPECTROMETRY</scope>
    <scope>TRANSMEMBRANE DOMAINS</scope>
    <scope>TOPOLOGY</scope>
</reference>
<evidence type="ECO:0000250" key="1">
    <source>
        <dbReference type="UniProtKB" id="Q86XQ3"/>
    </source>
</evidence>
<evidence type="ECO:0000250" key="2">
    <source>
        <dbReference type="UniProtKB" id="Q91ZR5"/>
    </source>
</evidence>
<evidence type="ECO:0000269" key="3">
    <source>
    </source>
</evidence>
<evidence type="ECO:0000269" key="4">
    <source>
    </source>
</evidence>
<evidence type="ECO:0000269" key="5">
    <source>
    </source>
</evidence>
<evidence type="ECO:0000269" key="6">
    <source>
    </source>
</evidence>
<evidence type="ECO:0000269" key="7">
    <source>
    </source>
</evidence>
<evidence type="ECO:0000269" key="8">
    <source>
    </source>
</evidence>
<evidence type="ECO:0000269" key="9">
    <source>
    </source>
</evidence>
<evidence type="ECO:0000269" key="10">
    <source>
    </source>
</evidence>
<evidence type="ECO:0000303" key="11">
    <source>
    </source>
</evidence>
<evidence type="ECO:0000305" key="12"/>
<evidence type="ECO:0000305" key="13">
    <source>
    </source>
</evidence>
<evidence type="ECO:0000305" key="14">
    <source>
    </source>
</evidence>
<evidence type="ECO:0007829" key="15">
    <source>
        <dbReference type="PDB" id="7EEB"/>
    </source>
</evidence>
<name>CTSR3_MOUSE</name>
<organism>
    <name type="scientific">Mus musculus</name>
    <name type="common">Mouse</name>
    <dbReference type="NCBI Taxonomy" id="10090"/>
    <lineage>
        <taxon>Eukaryota</taxon>
        <taxon>Metazoa</taxon>
        <taxon>Chordata</taxon>
        <taxon>Craniata</taxon>
        <taxon>Vertebrata</taxon>
        <taxon>Euteleostomi</taxon>
        <taxon>Mammalia</taxon>
        <taxon>Eutheria</taxon>
        <taxon>Euarchontoglires</taxon>
        <taxon>Glires</taxon>
        <taxon>Rodentia</taxon>
        <taxon>Myomorpha</taxon>
        <taxon>Muroidea</taxon>
        <taxon>Muridae</taxon>
        <taxon>Murinae</taxon>
        <taxon>Mus</taxon>
        <taxon>Mus</taxon>
    </lineage>
</organism>
<protein>
    <recommendedName>
        <fullName>Cation channel sperm-associated protein 3</fullName>
        <shortName>CatSper3</shortName>
    </recommendedName>
</protein>
<gene>
    <name type="primary">Catsper3</name>
</gene>
<comment type="function">
    <text evidence="4 5 8">Pore-forming subunit of the CatSper complex, a sperm-specific voltage-gated calcium channel that plays a central role in sperm cell hyperactivation. Controls calcium entry to mediate the hyperactivated motility, a step needed for sperm motility which is essential late in the preparation of sperm for fertilization.</text>
</comment>
<comment type="catalytic activity">
    <reaction evidence="13 14">
        <text>Ca(2+)(in) = Ca(2+)(out)</text>
        <dbReference type="Rhea" id="RHEA:29671"/>
        <dbReference type="ChEBI" id="CHEBI:29108"/>
    </reaction>
</comment>
<comment type="activity regulation">
    <text evidence="1 8">In contrast to the human ortholog, not activated by progesterone (PubMed:21412339). Activated by intracellular alkalinization (By similarity).</text>
</comment>
<comment type="subunit">
    <text evidence="2 4 7 9 10">Component of the CatSper complex or CatSpermasome composed of the core pore-forming members CATSPER1, CATSPER2, CATSPER3 and CATSPER4 as well as auxiliary members CATSPERB, CATSPERG2, CATSPERD, CATSPERE, CATSPERZ, C2CD6/CATSPERT, SLCO6C1, TMEM249, TMEM262 and EFCAB9 (PubMed:17227845, PubMed:21224844, PubMed:34225353, PubMed:34998468). HSPA1 may be an additional auxiliary complex member (By similarity). The core complex members CATSPER1, CATSPER2, CATSPER3 and CATSPER4 form a heterotetrameric channel (PubMed:34225353). The auxiliary CATSPERB, CATSPERG2, CATSPERD and CATSPERE subunits form a pavilion-like structure over the pore which stabilizes the complex through interactions with CATSPER4, CATSPER3, CATSPER1 and CATSPER2 respectively (PubMed:34225353). SLCO6C1 interacts with CATSPERE and TMEM262/CATSPERH interacts with CATSPERB, further stabilizing the complex (PubMed:34225353). C2CD6/CATSPERT interacts at least with CATSPERD and is required for targeting the CatSper complex in the flagellar membrane (PubMed:34998468).</text>
</comment>
<comment type="interaction">
    <interactant intactId="EBI-15619135">
        <id>Q80W99</id>
    </interactant>
    <interactant intactId="EBI-15619083">
        <id>Q91ZR5</id>
        <label>Catsper1</label>
    </interactant>
    <organismsDiffer>false</organismsDiffer>
    <experiments>2</experiments>
</comment>
<comment type="subcellular location">
    <subcellularLocation>
        <location evidence="3 4">Cell projection</location>
        <location evidence="3 4">Cilium</location>
        <location evidence="3 4">Flagellum membrane</location>
        <topology evidence="9">Multi-pass membrane protein</topology>
    </subcellularLocation>
</comment>
<comment type="alternative products">
    <event type="alternative splicing"/>
    <isoform>
        <id>Q80W99-1</id>
        <name>1</name>
        <sequence type="displayed"/>
    </isoform>
    <isoform>
        <id>Q80W99-2</id>
        <name>2</name>
        <sequence type="described" ref="VSP_026978"/>
    </isoform>
</comment>
<comment type="tissue specificity">
    <text evidence="3 4">Testis-specific.</text>
</comment>
<comment type="developmental stage">
    <text evidence="6">Detected in hte testis during postnatal development at day 15. Restricted to the late-stage germline cells that line the seminiferous tubules.</text>
</comment>
<comment type="disruption phenotype">
    <text evidence="4 5">Mice are normal but males are sterile. Male sterility is due to defects in sperm motility unability to fertilize intact eggs.</text>
</comment>
<comment type="similarity">
    <text evidence="12">Belongs to the cation channel sperm-associated (TC 1.A.1.19) family.</text>
</comment>
<comment type="sequence caution" evidence="12">
    <conflict type="miscellaneous discrepancy">
        <sequence resource="EMBL-CDS" id="AAH89518"/>
    </conflict>
    <text>Contaminating sequence.</text>
</comment>
<accession>Q80W99</accession>
<accession>Q5FWA9</accession>
<accession>Q9D5T9</accession>
<proteinExistence type="evidence at protein level"/>
<feature type="chain" id="PRO_0000295680" description="Cation channel sperm-associated protein 3">
    <location>
        <begin position="1"/>
        <end position="395"/>
    </location>
</feature>
<feature type="topological domain" description="Cytoplasmic" evidence="9">
    <location>
        <begin position="1"/>
        <end position="48"/>
    </location>
</feature>
<feature type="transmembrane region" description="Helical; Name=Segment S1" evidence="9">
    <location>
        <begin position="49"/>
        <end position="71"/>
    </location>
</feature>
<feature type="topological domain" description="Extracellular" evidence="9">
    <location>
        <begin position="72"/>
        <end position="80"/>
    </location>
</feature>
<feature type="transmembrane region" description="Helical; Name=Segment S2" evidence="9">
    <location>
        <begin position="81"/>
        <end position="107"/>
    </location>
</feature>
<feature type="topological domain" description="Cytoplasmic" evidence="9">
    <location>
        <position position="108"/>
    </location>
</feature>
<feature type="transmembrane region" description="Helical; Name=Segment S3" evidence="9">
    <location>
        <begin position="109"/>
        <end position="131"/>
    </location>
</feature>
<feature type="topological domain" description="Extracellular" evidence="9">
    <location>
        <begin position="132"/>
        <end position="143"/>
    </location>
</feature>
<feature type="transmembrane region" description="Helical; Name=Segment S4" evidence="9">
    <location>
        <begin position="144"/>
        <end position="160"/>
    </location>
</feature>
<feature type="topological domain" description="Cytoplasmic" evidence="9">
    <location>
        <begin position="161"/>
        <end position="168"/>
    </location>
</feature>
<feature type="transmembrane region" description="Helical; Name=Segment S5" evidence="9">
    <location>
        <begin position="169"/>
        <end position="195"/>
    </location>
</feature>
<feature type="topological domain" description="Extracellular" evidence="9">
    <location>
        <begin position="196"/>
        <end position="216"/>
    </location>
</feature>
<feature type="intramembrane region" description="Helical; Pore-forming" evidence="9">
    <location>
        <begin position="217"/>
        <end position="236"/>
    </location>
</feature>
<feature type="topological domain" description="Extracellular" evidence="9">
    <location>
        <begin position="237"/>
        <end position="242"/>
    </location>
</feature>
<feature type="transmembrane region" description="Helical; Name=Segment S6" evidence="9">
    <location>
        <begin position="243"/>
        <end position="268"/>
    </location>
</feature>
<feature type="topological domain" description="Cytoplasmic" evidence="9">
    <location>
        <begin position="269"/>
        <end position="395"/>
    </location>
</feature>
<feature type="splice variant" id="VSP_026978" description="In isoform 2." evidence="11">
    <location>
        <begin position="84"/>
        <end position="96"/>
    </location>
</feature>
<feature type="sequence conflict" description="In Ref. 1; AAP21831." evidence="12" ref="1">
    <original>S</original>
    <variation>T</variation>
    <location>
        <position position="314"/>
    </location>
</feature>
<feature type="helix" evidence="15">
    <location>
        <begin position="39"/>
        <end position="47"/>
    </location>
</feature>
<feature type="helix" evidence="15">
    <location>
        <begin position="50"/>
        <end position="69"/>
    </location>
</feature>
<feature type="helix" evidence="15">
    <location>
        <begin position="73"/>
        <end position="77"/>
    </location>
</feature>
<feature type="helix" evidence="15">
    <location>
        <begin position="80"/>
        <end position="103"/>
    </location>
</feature>
<feature type="helix" evidence="15">
    <location>
        <begin position="108"/>
        <end position="110"/>
    </location>
</feature>
<feature type="helix" evidence="15">
    <location>
        <begin position="113"/>
        <end position="133"/>
    </location>
</feature>
<feature type="helix" evidence="15">
    <location>
        <begin position="142"/>
        <end position="147"/>
    </location>
</feature>
<feature type="helix" evidence="15">
    <location>
        <begin position="148"/>
        <end position="158"/>
    </location>
</feature>
<feature type="helix" evidence="15">
    <location>
        <begin position="161"/>
        <end position="171"/>
    </location>
</feature>
<feature type="helix" evidence="15">
    <location>
        <begin position="174"/>
        <end position="199"/>
    </location>
</feature>
<feature type="turn" evidence="15">
    <location>
        <begin position="200"/>
        <end position="202"/>
    </location>
</feature>
<feature type="strand" evidence="15">
    <location>
        <begin position="203"/>
        <end position="205"/>
    </location>
</feature>
<feature type="turn" evidence="15">
    <location>
        <begin position="207"/>
        <end position="209"/>
    </location>
</feature>
<feature type="strand" evidence="15">
    <location>
        <begin position="210"/>
        <end position="212"/>
    </location>
</feature>
<feature type="helix" evidence="15">
    <location>
        <begin position="213"/>
        <end position="224"/>
    </location>
</feature>
<feature type="helix" evidence="15">
    <location>
        <begin position="229"/>
        <end position="237"/>
    </location>
</feature>
<feature type="helix" evidence="15">
    <location>
        <begin position="244"/>
        <end position="255"/>
    </location>
</feature>
<feature type="turn" evidence="15">
    <location>
        <begin position="256"/>
        <end position="259"/>
    </location>
</feature>
<feature type="helix" evidence="15">
    <location>
        <begin position="260"/>
        <end position="314"/>
    </location>
</feature>